<keyword id="KW-0067">ATP-binding</keyword>
<keyword id="KW-0175">Coiled coil</keyword>
<keyword id="KW-0418">Kinase</keyword>
<keyword id="KW-0547">Nucleotide-binding</keyword>
<keyword id="KW-1185">Reference proteome</keyword>
<keyword id="KW-0723">Serine/threonine-protein kinase</keyword>
<keyword id="KW-0808">Transferase</keyword>
<evidence type="ECO:0000255" key="1"/>
<evidence type="ECO:0000255" key="2">
    <source>
        <dbReference type="PROSITE-ProRule" id="PRU00086"/>
    </source>
</evidence>
<evidence type="ECO:0000255" key="3">
    <source>
        <dbReference type="PROSITE-ProRule" id="PRU00159"/>
    </source>
</evidence>
<evidence type="ECO:0000255" key="4">
    <source>
        <dbReference type="PROSITE-ProRule" id="PRU10027"/>
    </source>
</evidence>
<evidence type="ECO:0000256" key="5">
    <source>
        <dbReference type="SAM" id="MobiDB-lite"/>
    </source>
</evidence>
<evidence type="ECO:0000305" key="6"/>
<sequence>MDELTQANTLAIDEDLVDSVNSVKGWGILKSLNPSYPDISLVENVITFGRLKDSTVHYNDKSISGSHCKITRESNDDDGVVIAFIYDNSTNGTFIDNIKVGKGSRCLLASGQEISLTPQKQLEKIAYIFQTVEKEIEDGGPSNKYFIGEMLGQGNFATVKLAVERTTGVKYAVKIVDKKKYFMNSSARKDSLMDEVNILRGLSHPNIIQIIEVFENEKVLSLILELVECGELLNDIVSNLFYTEDKAKTLFRQIVDGVLYLHNKGIAHRDLKPENILLKHKNFNQNDAIKLTDFGLSRTVSDGSFMKTMCGTPQYLAPEILTSSGGHNGYGLEVDCWSMGAILYIMLCGYPPFDDSREVSIFEQIRNAKFEFDPEDWSSVSEEAKDLIKRLLCVDPHKRYTCNNIIQHPWFNPNVKLSTLLEEDERLRKKAEAEVEANNNNTNKSNSPKMLGKRKSEDGNCSDSNNNNNSGSKSLSSIKSNTTMLDCDEKSNNNNNNGHKKSKSDPTSNNSLFNNDNNNNNNNNNNNNNNNNNNNNNNNNNNNNNNNNNNNNNNNNNNNNNNNNNNNSNDTTDSDTDDETISLPVITKNSKSMSNLQNHLNNNKINSDDESETSTNNNNNNNNNNNNNNNNNNNNNNNNKPSTINNNFPVPFPKSPTKNSPNASPPIKPQNSSNNNSGLAGIDKPKCQYDPNCYRKNPQHLRDFYHTVSSNK</sequence>
<accession>Q54VI1</accession>
<organism>
    <name type="scientific">Dictyostelium discoideum</name>
    <name type="common">Social amoeba</name>
    <dbReference type="NCBI Taxonomy" id="44689"/>
    <lineage>
        <taxon>Eukaryota</taxon>
        <taxon>Amoebozoa</taxon>
        <taxon>Evosea</taxon>
        <taxon>Eumycetozoa</taxon>
        <taxon>Dictyostelia</taxon>
        <taxon>Dictyosteliales</taxon>
        <taxon>Dictyosteliaceae</taxon>
        <taxon>Dictyostelium</taxon>
    </lineage>
</organism>
<protein>
    <recommendedName>
        <fullName>Probable serine/threonine-protein kinase fhkE</fullName>
        <ecNumber>2.7.11.1</ecNumber>
    </recommendedName>
    <alternativeName>
        <fullName>Forkhead-associated kinase protein E</fullName>
    </alternativeName>
</protein>
<name>FHKE_DICDI</name>
<proteinExistence type="inferred from homology"/>
<reference key="1">
    <citation type="journal article" date="2005" name="Nature">
        <title>The genome of the social amoeba Dictyostelium discoideum.</title>
        <authorList>
            <person name="Eichinger L."/>
            <person name="Pachebat J.A."/>
            <person name="Gloeckner G."/>
            <person name="Rajandream M.A."/>
            <person name="Sucgang R."/>
            <person name="Berriman M."/>
            <person name="Song J."/>
            <person name="Olsen R."/>
            <person name="Szafranski K."/>
            <person name="Xu Q."/>
            <person name="Tunggal B."/>
            <person name="Kummerfeld S."/>
            <person name="Madera M."/>
            <person name="Konfortov B.A."/>
            <person name="Rivero F."/>
            <person name="Bankier A.T."/>
            <person name="Lehmann R."/>
            <person name="Hamlin N."/>
            <person name="Davies R."/>
            <person name="Gaudet P."/>
            <person name="Fey P."/>
            <person name="Pilcher K."/>
            <person name="Chen G."/>
            <person name="Saunders D."/>
            <person name="Sodergren E.J."/>
            <person name="Davis P."/>
            <person name="Kerhornou A."/>
            <person name="Nie X."/>
            <person name="Hall N."/>
            <person name="Anjard C."/>
            <person name="Hemphill L."/>
            <person name="Bason N."/>
            <person name="Farbrother P."/>
            <person name="Desany B."/>
            <person name="Just E."/>
            <person name="Morio T."/>
            <person name="Rost R."/>
            <person name="Churcher C.M."/>
            <person name="Cooper J."/>
            <person name="Haydock S."/>
            <person name="van Driessche N."/>
            <person name="Cronin A."/>
            <person name="Goodhead I."/>
            <person name="Muzny D.M."/>
            <person name="Mourier T."/>
            <person name="Pain A."/>
            <person name="Lu M."/>
            <person name="Harper D."/>
            <person name="Lindsay R."/>
            <person name="Hauser H."/>
            <person name="James K.D."/>
            <person name="Quiles M."/>
            <person name="Madan Babu M."/>
            <person name="Saito T."/>
            <person name="Buchrieser C."/>
            <person name="Wardroper A."/>
            <person name="Felder M."/>
            <person name="Thangavelu M."/>
            <person name="Johnson D."/>
            <person name="Knights A."/>
            <person name="Loulseged H."/>
            <person name="Mungall K.L."/>
            <person name="Oliver K."/>
            <person name="Price C."/>
            <person name="Quail M.A."/>
            <person name="Urushihara H."/>
            <person name="Hernandez J."/>
            <person name="Rabbinowitsch E."/>
            <person name="Steffen D."/>
            <person name="Sanders M."/>
            <person name="Ma J."/>
            <person name="Kohara Y."/>
            <person name="Sharp S."/>
            <person name="Simmonds M.N."/>
            <person name="Spiegler S."/>
            <person name="Tivey A."/>
            <person name="Sugano S."/>
            <person name="White B."/>
            <person name="Walker D."/>
            <person name="Woodward J.R."/>
            <person name="Winckler T."/>
            <person name="Tanaka Y."/>
            <person name="Shaulsky G."/>
            <person name="Schleicher M."/>
            <person name="Weinstock G.M."/>
            <person name="Rosenthal A."/>
            <person name="Cox E.C."/>
            <person name="Chisholm R.L."/>
            <person name="Gibbs R.A."/>
            <person name="Loomis W.F."/>
            <person name="Platzer M."/>
            <person name="Kay R.R."/>
            <person name="Williams J.G."/>
            <person name="Dear P.H."/>
            <person name="Noegel A.A."/>
            <person name="Barrell B.G."/>
            <person name="Kuspa A."/>
        </authorList>
    </citation>
    <scope>NUCLEOTIDE SEQUENCE [LARGE SCALE GENOMIC DNA]</scope>
    <source>
        <strain>AX4</strain>
    </source>
</reference>
<feature type="chain" id="PRO_0000367488" description="Probable serine/threonine-protein kinase fhkE">
    <location>
        <begin position="1"/>
        <end position="712"/>
    </location>
</feature>
<feature type="domain" description="FHA" evidence="2">
    <location>
        <begin position="46"/>
        <end position="100"/>
    </location>
</feature>
<feature type="domain" description="Protein kinase" evidence="3">
    <location>
        <begin position="145"/>
        <end position="411"/>
    </location>
</feature>
<feature type="region of interest" description="Disordered" evidence="5">
    <location>
        <begin position="431"/>
        <end position="695"/>
    </location>
</feature>
<feature type="coiled-coil region" evidence="1">
    <location>
        <begin position="414"/>
        <end position="442"/>
    </location>
</feature>
<feature type="compositionally biased region" description="Low complexity" evidence="5">
    <location>
        <begin position="436"/>
        <end position="446"/>
    </location>
</feature>
<feature type="compositionally biased region" description="Low complexity" evidence="5">
    <location>
        <begin position="459"/>
        <end position="481"/>
    </location>
</feature>
<feature type="compositionally biased region" description="Low complexity" evidence="5">
    <location>
        <begin position="514"/>
        <end position="571"/>
    </location>
</feature>
<feature type="compositionally biased region" description="Low complexity" evidence="5">
    <location>
        <begin position="595"/>
        <end position="605"/>
    </location>
</feature>
<feature type="compositionally biased region" description="Low complexity" evidence="5">
    <location>
        <begin position="616"/>
        <end position="639"/>
    </location>
</feature>
<feature type="compositionally biased region" description="Polar residues" evidence="5">
    <location>
        <begin position="669"/>
        <end position="678"/>
    </location>
</feature>
<feature type="active site" description="Proton acceptor" evidence="3 4">
    <location>
        <position position="270"/>
    </location>
</feature>
<feature type="binding site" evidence="3">
    <location>
        <begin position="151"/>
        <end position="159"/>
    </location>
    <ligand>
        <name>ATP</name>
        <dbReference type="ChEBI" id="CHEBI:30616"/>
    </ligand>
</feature>
<feature type="binding site" evidence="3">
    <location>
        <position position="174"/>
    </location>
    <ligand>
        <name>ATP</name>
        <dbReference type="ChEBI" id="CHEBI:30616"/>
    </ligand>
</feature>
<dbReference type="EC" id="2.7.11.1"/>
<dbReference type="EMBL" id="AAFI02000035">
    <property type="protein sequence ID" value="EAL67387.1"/>
    <property type="molecule type" value="Genomic_DNA"/>
</dbReference>
<dbReference type="RefSeq" id="XP_641374.1">
    <property type="nucleotide sequence ID" value="XM_636282.1"/>
</dbReference>
<dbReference type="SMR" id="Q54VI1"/>
<dbReference type="FunCoup" id="Q54VI1">
    <property type="interactions" value="145"/>
</dbReference>
<dbReference type="STRING" id="44689.Q54VI1"/>
<dbReference type="PaxDb" id="44689-DDB0216333"/>
<dbReference type="EnsemblProtists" id="EAL67387">
    <property type="protein sequence ID" value="EAL67387"/>
    <property type="gene ID" value="DDB_G0280321"/>
</dbReference>
<dbReference type="GeneID" id="8622508"/>
<dbReference type="KEGG" id="ddi:DDB_G0280321"/>
<dbReference type="dictyBase" id="DDB_G0280321">
    <property type="gene designation" value="fhkE"/>
</dbReference>
<dbReference type="VEuPathDB" id="AmoebaDB:DDB_G0280321"/>
<dbReference type="eggNOG" id="KOG0615">
    <property type="taxonomic scope" value="Eukaryota"/>
</dbReference>
<dbReference type="HOGENOM" id="CLU_388034_0_0_1"/>
<dbReference type="InParanoid" id="Q54VI1"/>
<dbReference type="OMA" id="HPWFNPN"/>
<dbReference type="PhylomeDB" id="Q54VI1"/>
<dbReference type="Reactome" id="R-DDI-5693565">
    <property type="pathway name" value="Recruitment and ATM-mediated phosphorylation of repair and signaling proteins at DNA double strand breaks"/>
</dbReference>
<dbReference type="Reactome" id="R-DDI-6804760">
    <property type="pathway name" value="Regulation of TP53 Activity through Methylation"/>
</dbReference>
<dbReference type="Reactome" id="R-DDI-69473">
    <property type="pathway name" value="G2/M DNA damage checkpoint"/>
</dbReference>
<dbReference type="Reactome" id="R-DDI-69601">
    <property type="pathway name" value="Ubiquitin Mediated Degradation of Phosphorylated Cdc25A"/>
</dbReference>
<dbReference type="Reactome" id="R-DDI-75035">
    <property type="pathway name" value="Chk1/Chk2(Cds1) mediated inactivation of Cyclin B:Cdk1 complex"/>
</dbReference>
<dbReference type="PRO" id="PR:Q54VI1"/>
<dbReference type="Proteomes" id="UP000002195">
    <property type="component" value="Chromosome 3"/>
</dbReference>
<dbReference type="GO" id="GO:0005634">
    <property type="term" value="C:nucleus"/>
    <property type="evidence" value="ECO:0000318"/>
    <property type="project" value="GO_Central"/>
</dbReference>
<dbReference type="GO" id="GO:0005524">
    <property type="term" value="F:ATP binding"/>
    <property type="evidence" value="ECO:0007669"/>
    <property type="project" value="UniProtKB-KW"/>
</dbReference>
<dbReference type="GO" id="GO:0106310">
    <property type="term" value="F:protein serine kinase activity"/>
    <property type="evidence" value="ECO:0007669"/>
    <property type="project" value="RHEA"/>
</dbReference>
<dbReference type="GO" id="GO:0004674">
    <property type="term" value="F:protein serine/threonine kinase activity"/>
    <property type="evidence" value="ECO:0000250"/>
    <property type="project" value="dictyBase"/>
</dbReference>
<dbReference type="GO" id="GO:0000077">
    <property type="term" value="P:DNA damage checkpoint signaling"/>
    <property type="evidence" value="ECO:0000250"/>
    <property type="project" value="dictyBase"/>
</dbReference>
<dbReference type="GO" id="GO:0006974">
    <property type="term" value="P:DNA damage response"/>
    <property type="evidence" value="ECO:0000250"/>
    <property type="project" value="dictyBase"/>
</dbReference>
<dbReference type="GO" id="GO:0044773">
    <property type="term" value="P:mitotic DNA damage checkpoint signaling"/>
    <property type="evidence" value="ECO:0000318"/>
    <property type="project" value="GO_Central"/>
</dbReference>
<dbReference type="CDD" id="cd22690">
    <property type="entry name" value="FHA_RAD53-like_rpt2"/>
    <property type="match status" value="1"/>
</dbReference>
<dbReference type="CDD" id="cd05117">
    <property type="entry name" value="STKc_CAMK"/>
    <property type="match status" value="1"/>
</dbReference>
<dbReference type="FunFam" id="1.10.510.10:FF:000571">
    <property type="entry name" value="Maternal embryonic leucine zipper kinase"/>
    <property type="match status" value="1"/>
</dbReference>
<dbReference type="FunFam" id="3.30.200.20:FF:000470">
    <property type="entry name" value="Serine/threonine-protein kinase RAD53"/>
    <property type="match status" value="1"/>
</dbReference>
<dbReference type="Gene3D" id="2.60.200.20">
    <property type="match status" value="1"/>
</dbReference>
<dbReference type="Gene3D" id="3.30.200.20">
    <property type="entry name" value="Phosphorylase Kinase, domain 1"/>
    <property type="match status" value="1"/>
</dbReference>
<dbReference type="Gene3D" id="1.10.510.10">
    <property type="entry name" value="Transferase(Phosphotransferase) domain 1"/>
    <property type="match status" value="1"/>
</dbReference>
<dbReference type="InterPro" id="IPR019406">
    <property type="entry name" value="APLF_PBZ"/>
</dbReference>
<dbReference type="InterPro" id="IPR000253">
    <property type="entry name" value="FHA_dom"/>
</dbReference>
<dbReference type="InterPro" id="IPR011009">
    <property type="entry name" value="Kinase-like_dom_sf"/>
</dbReference>
<dbReference type="InterPro" id="IPR000719">
    <property type="entry name" value="Prot_kinase_dom"/>
</dbReference>
<dbReference type="InterPro" id="IPR017441">
    <property type="entry name" value="Protein_kinase_ATP_BS"/>
</dbReference>
<dbReference type="InterPro" id="IPR008271">
    <property type="entry name" value="Ser/Thr_kinase_AS"/>
</dbReference>
<dbReference type="InterPro" id="IPR008984">
    <property type="entry name" value="SMAD_FHA_dom_sf"/>
</dbReference>
<dbReference type="PANTHER" id="PTHR24347">
    <property type="entry name" value="SERINE/THREONINE-PROTEIN KINASE"/>
    <property type="match status" value="1"/>
</dbReference>
<dbReference type="Pfam" id="PF00498">
    <property type="entry name" value="FHA"/>
    <property type="match status" value="1"/>
</dbReference>
<dbReference type="Pfam" id="PF00069">
    <property type="entry name" value="Pkinase"/>
    <property type="match status" value="1"/>
</dbReference>
<dbReference type="Pfam" id="PF10283">
    <property type="entry name" value="zf-CCHH"/>
    <property type="match status" value="1"/>
</dbReference>
<dbReference type="SMART" id="SM00240">
    <property type="entry name" value="FHA"/>
    <property type="match status" value="1"/>
</dbReference>
<dbReference type="SMART" id="SM00220">
    <property type="entry name" value="S_TKc"/>
    <property type="match status" value="1"/>
</dbReference>
<dbReference type="SUPFAM" id="SSF56112">
    <property type="entry name" value="Protein kinase-like (PK-like)"/>
    <property type="match status" value="1"/>
</dbReference>
<dbReference type="SUPFAM" id="SSF49879">
    <property type="entry name" value="SMAD/FHA domain"/>
    <property type="match status" value="1"/>
</dbReference>
<dbReference type="PROSITE" id="PS50006">
    <property type="entry name" value="FHA_DOMAIN"/>
    <property type="match status" value="1"/>
</dbReference>
<dbReference type="PROSITE" id="PS00107">
    <property type="entry name" value="PROTEIN_KINASE_ATP"/>
    <property type="match status" value="1"/>
</dbReference>
<dbReference type="PROSITE" id="PS50011">
    <property type="entry name" value="PROTEIN_KINASE_DOM"/>
    <property type="match status" value="1"/>
</dbReference>
<dbReference type="PROSITE" id="PS00108">
    <property type="entry name" value="PROTEIN_KINASE_ST"/>
    <property type="match status" value="1"/>
</dbReference>
<gene>
    <name type="primary">fhkE</name>
    <name type="synonym">fhake</name>
    <name type="ORF">DDB_G0280321</name>
</gene>
<comment type="catalytic activity">
    <reaction>
        <text>L-seryl-[protein] + ATP = O-phospho-L-seryl-[protein] + ADP + H(+)</text>
        <dbReference type="Rhea" id="RHEA:17989"/>
        <dbReference type="Rhea" id="RHEA-COMP:9863"/>
        <dbReference type="Rhea" id="RHEA-COMP:11604"/>
        <dbReference type="ChEBI" id="CHEBI:15378"/>
        <dbReference type="ChEBI" id="CHEBI:29999"/>
        <dbReference type="ChEBI" id="CHEBI:30616"/>
        <dbReference type="ChEBI" id="CHEBI:83421"/>
        <dbReference type="ChEBI" id="CHEBI:456216"/>
        <dbReference type="EC" id="2.7.11.1"/>
    </reaction>
</comment>
<comment type="catalytic activity">
    <reaction>
        <text>L-threonyl-[protein] + ATP = O-phospho-L-threonyl-[protein] + ADP + H(+)</text>
        <dbReference type="Rhea" id="RHEA:46608"/>
        <dbReference type="Rhea" id="RHEA-COMP:11060"/>
        <dbReference type="Rhea" id="RHEA-COMP:11605"/>
        <dbReference type="ChEBI" id="CHEBI:15378"/>
        <dbReference type="ChEBI" id="CHEBI:30013"/>
        <dbReference type="ChEBI" id="CHEBI:30616"/>
        <dbReference type="ChEBI" id="CHEBI:61977"/>
        <dbReference type="ChEBI" id="CHEBI:456216"/>
        <dbReference type="EC" id="2.7.11.1"/>
    </reaction>
</comment>
<comment type="similarity">
    <text evidence="6">Belongs to the protein kinase superfamily. CAMK Ser/Thr protein kinase family. CHK2 subfamily.</text>
</comment>